<protein>
    <recommendedName>
        <fullName>Protein TonB</fullName>
    </recommendedName>
</protein>
<evidence type="ECO:0000250" key="1"/>
<evidence type="ECO:0000255" key="2"/>
<evidence type="ECO:0000255" key="3">
    <source>
        <dbReference type="PROSITE-ProRule" id="PRU01359"/>
    </source>
</evidence>
<evidence type="ECO:0000256" key="4">
    <source>
        <dbReference type="SAM" id="MobiDB-lite"/>
    </source>
</evidence>
<evidence type="ECO:0000305" key="5"/>
<gene>
    <name type="primary">tonB</name>
</gene>
<reference key="1">
    <citation type="journal article" date="1993" name="Mol. Microbiol.">
        <title>Identification and characterization of the exbB, exbD and tonB genes of Pseudomonas putida WCS358: their involvement in ferric-pseudobactin transport.</title>
        <authorList>
            <person name="Bitter W."/>
            <person name="Tommassen J."/>
            <person name="Weisbeek P.J."/>
        </authorList>
    </citation>
    <scope>NUCLEOTIDE SEQUENCE [GENOMIC DNA]</scope>
    <source>
        <strain>WCS358</strain>
    </source>
</reference>
<accession>Q05613</accession>
<keyword id="KW-0997">Cell inner membrane</keyword>
<keyword id="KW-1003">Cell membrane</keyword>
<keyword id="KW-0472">Membrane</keyword>
<keyword id="KW-0653">Protein transport</keyword>
<keyword id="KW-0735">Signal-anchor</keyword>
<keyword id="KW-0812">Transmembrane</keyword>
<keyword id="KW-1133">Transmembrane helix</keyword>
<keyword id="KW-0813">Transport</keyword>
<feature type="chain" id="PRO_0000196208" description="Protein TonB">
    <location>
        <begin position="1"/>
        <end position="243"/>
    </location>
</feature>
<feature type="topological domain" description="Cytoplasmic" evidence="2">
    <location>
        <begin position="1"/>
        <end position="12"/>
    </location>
</feature>
<feature type="transmembrane region" description="Helical; Signal-anchor" evidence="2">
    <location>
        <begin position="13"/>
        <end position="32"/>
    </location>
</feature>
<feature type="topological domain" description="Periplasmic" evidence="2">
    <location>
        <begin position="33"/>
        <end position="243"/>
    </location>
</feature>
<feature type="domain" description="TonB C-terminal" evidence="3">
    <location>
        <begin position="149"/>
        <end position="243"/>
    </location>
</feature>
<feature type="region of interest" description="Disordered" evidence="4">
    <location>
        <begin position="54"/>
        <end position="151"/>
    </location>
</feature>
<feature type="compositionally biased region" description="Pro residues" evidence="4">
    <location>
        <begin position="54"/>
        <end position="70"/>
    </location>
</feature>
<feature type="compositionally biased region" description="Low complexity" evidence="4">
    <location>
        <begin position="71"/>
        <end position="91"/>
    </location>
</feature>
<feature type="compositionally biased region" description="Basic and acidic residues" evidence="4">
    <location>
        <begin position="103"/>
        <end position="112"/>
    </location>
</feature>
<feature type="compositionally biased region" description="Low complexity" evidence="4">
    <location>
        <begin position="129"/>
        <end position="148"/>
    </location>
</feature>
<proteinExistence type="inferred from homology"/>
<sequence>MTKTRHNLARYSGSLALVLGVHAVAVLLTLNWSVPQAIELPPAAMMVELAPLPEPAPPPPPKAAPQPPAPVEELPLPKLVEAPKPKIAIAKPPKPKAKPQPPKPEKKPEPPKEAPPTEEVVDAPPSNTPPQKSAAPAPSIASNSNALPTWQSDPVRHLAKYKRYPEDARRRGLQGINRLRFVVDAEGKVVSYAMAGGSGSAALDRATLEMIRRAGTVPKPPPELLNNGTIEVVAPFVYSLDRR</sequence>
<name>TONB_PSEPU</name>
<organism>
    <name type="scientific">Pseudomonas putida</name>
    <name type="common">Arthrobacter siderocapsulatus</name>
    <dbReference type="NCBI Taxonomy" id="303"/>
    <lineage>
        <taxon>Bacteria</taxon>
        <taxon>Pseudomonadati</taxon>
        <taxon>Pseudomonadota</taxon>
        <taxon>Gammaproteobacteria</taxon>
        <taxon>Pseudomonadales</taxon>
        <taxon>Pseudomonadaceae</taxon>
        <taxon>Pseudomonas</taxon>
    </lineage>
</organism>
<dbReference type="EMBL" id="X70139">
    <property type="protein sequence ID" value="CAA49716.1"/>
    <property type="molecule type" value="Genomic_DNA"/>
</dbReference>
<dbReference type="PIR" id="S28444">
    <property type="entry name" value="S28444"/>
</dbReference>
<dbReference type="SMR" id="Q05613"/>
<dbReference type="GO" id="GO:0098797">
    <property type="term" value="C:plasma membrane protein complex"/>
    <property type="evidence" value="ECO:0007669"/>
    <property type="project" value="TreeGrafter"/>
</dbReference>
<dbReference type="GO" id="GO:0031992">
    <property type="term" value="F:energy transducer activity"/>
    <property type="evidence" value="ECO:0007669"/>
    <property type="project" value="TreeGrafter"/>
</dbReference>
<dbReference type="GO" id="GO:0015031">
    <property type="term" value="P:protein transport"/>
    <property type="evidence" value="ECO:0007669"/>
    <property type="project" value="UniProtKB-KW"/>
</dbReference>
<dbReference type="GO" id="GO:0055085">
    <property type="term" value="P:transmembrane transport"/>
    <property type="evidence" value="ECO:0007669"/>
    <property type="project" value="InterPro"/>
</dbReference>
<dbReference type="Gene3D" id="3.30.1150.10">
    <property type="match status" value="1"/>
</dbReference>
<dbReference type="InterPro" id="IPR051045">
    <property type="entry name" value="TonB-dependent_transducer"/>
</dbReference>
<dbReference type="InterPro" id="IPR006260">
    <property type="entry name" value="TonB/TolA_C"/>
</dbReference>
<dbReference type="InterPro" id="IPR037682">
    <property type="entry name" value="TonB_C"/>
</dbReference>
<dbReference type="NCBIfam" id="TIGR01352">
    <property type="entry name" value="tonB_Cterm"/>
    <property type="match status" value="1"/>
</dbReference>
<dbReference type="PANTHER" id="PTHR33446:SF2">
    <property type="entry name" value="PROTEIN TONB"/>
    <property type="match status" value="1"/>
</dbReference>
<dbReference type="PANTHER" id="PTHR33446">
    <property type="entry name" value="PROTEIN TONB-RELATED"/>
    <property type="match status" value="1"/>
</dbReference>
<dbReference type="Pfam" id="PF03544">
    <property type="entry name" value="TonB_C"/>
    <property type="match status" value="1"/>
</dbReference>
<dbReference type="PRINTS" id="PR01217">
    <property type="entry name" value="PRICHEXTENSN"/>
</dbReference>
<dbReference type="SUPFAM" id="SSF74653">
    <property type="entry name" value="TolA/TonB C-terminal domain"/>
    <property type="match status" value="1"/>
</dbReference>
<dbReference type="PROSITE" id="PS52015">
    <property type="entry name" value="TONB_CTD"/>
    <property type="match status" value="1"/>
</dbReference>
<comment type="function">
    <text evidence="1">Interacts with outer membrane receptor proteins that carry out high-affinity binding and energy dependent uptake into the periplasmic space of specific substrates. It could act to transduce energy from the cytoplasmic membrane to specific energy-requiring processes in the outer membrane, resulting in the release into the periplasm of ligands bound by these outer membrane proteins (By similarity).</text>
</comment>
<comment type="subunit">
    <text evidence="1">Homodimer. Forms a complex with the accessory proteins ExbB and ExbD (By similarity).</text>
</comment>
<comment type="subcellular location">
    <subcellularLocation>
        <location>Cell inner membrane</location>
        <topology>Single-pass membrane protein</topology>
        <orientation>Periplasmic side</orientation>
    </subcellularLocation>
</comment>
<comment type="similarity">
    <text evidence="5">Belongs to the TonB family.</text>
</comment>